<reference evidence="10" key="1">
    <citation type="journal article" date="2002" name="DNA Seq.">
        <title>The zebrafish thrombospondin 3 and 4 genes (thbs3 and thbs4): cDNA and protein structure.</title>
        <authorList>
            <person name="Adolph K.W."/>
        </authorList>
    </citation>
    <scope>NUCLEOTIDE SEQUENCE [MRNA]</scope>
    <scope>DEVELOPMENTAL STAGE</scope>
</reference>
<reference key="2">
    <citation type="submission" date="2004-11" db="EMBL/GenBank/DDBJ databases">
        <authorList>
            <consortium name="NIH - Zebrafish Gene Collection (ZGC) project"/>
        </authorList>
    </citation>
    <scope>NUCLEOTIDE SEQUENCE [LARGE SCALE MRNA]</scope>
    <source>
        <tissue>Heart</tissue>
    </source>
</reference>
<protein>
    <recommendedName>
        <fullName>Thrombospondin-3a</fullName>
        <shortName>Thbs3a</shortName>
    </recommendedName>
</protein>
<accession>Q8JHW2</accession>
<accession>Q5U3J1</accession>
<evidence type="ECO:0000250" key="1"/>
<evidence type="ECO:0000250" key="2">
    <source>
        <dbReference type="UniProtKB" id="P35442"/>
    </source>
</evidence>
<evidence type="ECO:0000250" key="3">
    <source>
        <dbReference type="UniProtKB" id="P49746"/>
    </source>
</evidence>
<evidence type="ECO:0000250" key="4">
    <source>
        <dbReference type="UniProtKB" id="Q9R0G6"/>
    </source>
</evidence>
<evidence type="ECO:0000255" key="5"/>
<evidence type="ECO:0000255" key="6">
    <source>
        <dbReference type="PROSITE-ProRule" id="PRU00076"/>
    </source>
</evidence>
<evidence type="ECO:0000255" key="7">
    <source>
        <dbReference type="PROSITE-ProRule" id="PRU00635"/>
    </source>
</evidence>
<evidence type="ECO:0000256" key="8">
    <source>
        <dbReference type="SAM" id="MobiDB-lite"/>
    </source>
</evidence>
<evidence type="ECO:0000269" key="9">
    <source>
    </source>
</evidence>
<evidence type="ECO:0000305" key="10"/>
<evidence type="ECO:0000312" key="11">
    <source>
        <dbReference type="EMBL" id="AAM88772.1"/>
    </source>
</evidence>
<name>TSP3A_DANRE</name>
<dbReference type="EMBL" id="AF462310">
    <property type="protein sequence ID" value="AAM88772.1"/>
    <property type="molecule type" value="mRNA"/>
</dbReference>
<dbReference type="EMBL" id="BC085524">
    <property type="protein sequence ID" value="AAH85524.1"/>
    <property type="molecule type" value="mRNA"/>
</dbReference>
<dbReference type="RefSeq" id="NP_775332.1">
    <property type="nucleotide sequence ID" value="NM_173225.1"/>
</dbReference>
<dbReference type="SMR" id="Q8JHW2"/>
<dbReference type="FunCoup" id="Q8JHW2">
    <property type="interactions" value="1416"/>
</dbReference>
<dbReference type="STRING" id="7955.ENSDARP00000057304"/>
<dbReference type="GlyCosmos" id="Q8JHW2">
    <property type="glycosylation" value="5 sites, No reported glycans"/>
</dbReference>
<dbReference type="PaxDb" id="7955-ENSDARP00000057304"/>
<dbReference type="GeneID" id="252849"/>
<dbReference type="KEGG" id="dre:252849"/>
<dbReference type="AGR" id="ZFIN:ZDB-GENE-020708-3"/>
<dbReference type="CTD" id="252849"/>
<dbReference type="ZFIN" id="ZDB-GENE-020708-3">
    <property type="gene designation" value="thbs3a"/>
</dbReference>
<dbReference type="eggNOG" id="ENOG502QRK8">
    <property type="taxonomic scope" value="Eukaryota"/>
</dbReference>
<dbReference type="InParanoid" id="Q8JHW2"/>
<dbReference type="OrthoDB" id="14563at2759"/>
<dbReference type="PhylomeDB" id="Q8JHW2"/>
<dbReference type="PRO" id="PR:Q8JHW2"/>
<dbReference type="Proteomes" id="UP000000437">
    <property type="component" value="Chromosome 16"/>
</dbReference>
<dbReference type="GO" id="GO:0062023">
    <property type="term" value="C:collagen-containing extracellular matrix"/>
    <property type="evidence" value="ECO:0000318"/>
    <property type="project" value="GO_Central"/>
</dbReference>
<dbReference type="GO" id="GO:0005576">
    <property type="term" value="C:extracellular region"/>
    <property type="evidence" value="ECO:0000303"/>
    <property type="project" value="UniProtKB"/>
</dbReference>
<dbReference type="GO" id="GO:0005509">
    <property type="term" value="F:calcium ion binding"/>
    <property type="evidence" value="ECO:0007669"/>
    <property type="project" value="InterPro"/>
</dbReference>
<dbReference type="GO" id="GO:0008201">
    <property type="term" value="F:heparin binding"/>
    <property type="evidence" value="ECO:0000303"/>
    <property type="project" value="UniProtKB"/>
</dbReference>
<dbReference type="GO" id="GO:0007155">
    <property type="term" value="P:cell adhesion"/>
    <property type="evidence" value="ECO:0007669"/>
    <property type="project" value="UniProtKB-KW"/>
</dbReference>
<dbReference type="GO" id="GO:0060231">
    <property type="term" value="P:mesenchymal to epithelial transition"/>
    <property type="evidence" value="ECO:0000316"/>
    <property type="project" value="ZFIN"/>
</dbReference>
<dbReference type="GO" id="GO:0061053">
    <property type="term" value="P:somite development"/>
    <property type="evidence" value="ECO:0000316"/>
    <property type="project" value="ZFIN"/>
</dbReference>
<dbReference type="CDD" id="cd00054">
    <property type="entry name" value="EGF_CA"/>
    <property type="match status" value="2"/>
</dbReference>
<dbReference type="FunFam" id="4.10.1080.10:FF:000004">
    <property type="entry name" value="Cartilage oligomeric matrix protein"/>
    <property type="match status" value="1"/>
</dbReference>
<dbReference type="FunFam" id="2.10.25.10:FF:000038">
    <property type="entry name" value="Fibrillin 2"/>
    <property type="match status" value="1"/>
</dbReference>
<dbReference type="FunFam" id="2.10.25.10:FF:000025">
    <property type="entry name" value="Thrombospondin 3"/>
    <property type="match status" value="1"/>
</dbReference>
<dbReference type="FunFam" id="2.10.25.10:FF:000027">
    <property type="entry name" value="Thrombospondin 3"/>
    <property type="match status" value="1"/>
</dbReference>
<dbReference type="FunFam" id="2.60.120.200:FF:000002">
    <property type="entry name" value="Thrombospondin 3"/>
    <property type="match status" value="1"/>
</dbReference>
<dbReference type="FunFam" id="4.10.1080.10:FF:000001">
    <property type="entry name" value="Thrombospondin 3"/>
    <property type="match status" value="1"/>
</dbReference>
<dbReference type="FunFam" id="2.10.25.10:FF:000170">
    <property type="entry name" value="thrombospondin-3 isoform X1"/>
    <property type="match status" value="1"/>
</dbReference>
<dbReference type="FunFam" id="2.60.120.200:FF:000038">
    <property type="entry name" value="thrombospondin-3 isoform X1"/>
    <property type="match status" value="1"/>
</dbReference>
<dbReference type="FunFam" id="1.20.5.10:FF:000001">
    <property type="entry name" value="thrombospondin-3 isoform X2"/>
    <property type="match status" value="1"/>
</dbReference>
<dbReference type="Gene3D" id="1.20.5.10">
    <property type="match status" value="1"/>
</dbReference>
<dbReference type="Gene3D" id="2.60.120.200">
    <property type="match status" value="2"/>
</dbReference>
<dbReference type="Gene3D" id="2.10.25.10">
    <property type="entry name" value="Laminin"/>
    <property type="match status" value="4"/>
</dbReference>
<dbReference type="Gene3D" id="4.10.1080.10">
    <property type="entry name" value="TSP type-3 repeat"/>
    <property type="match status" value="2"/>
</dbReference>
<dbReference type="InterPro" id="IPR013320">
    <property type="entry name" value="ConA-like_dom_sf"/>
</dbReference>
<dbReference type="InterPro" id="IPR001881">
    <property type="entry name" value="EGF-like_Ca-bd_dom"/>
</dbReference>
<dbReference type="InterPro" id="IPR000742">
    <property type="entry name" value="EGF-like_dom"/>
</dbReference>
<dbReference type="InterPro" id="IPR018097">
    <property type="entry name" value="EGF_Ca-bd_CS"/>
</dbReference>
<dbReference type="InterPro" id="IPR009030">
    <property type="entry name" value="Growth_fac_rcpt_cys_sf"/>
</dbReference>
<dbReference type="InterPro" id="IPR049883">
    <property type="entry name" value="NOTCH1_EGF-like"/>
</dbReference>
<dbReference type="InterPro" id="IPR003367">
    <property type="entry name" value="Thrombospondin_3-like_rpt"/>
</dbReference>
<dbReference type="InterPro" id="IPR017897">
    <property type="entry name" value="Thrombospondin_3_rpt"/>
</dbReference>
<dbReference type="InterPro" id="IPR008859">
    <property type="entry name" value="Thrombospondin_C"/>
</dbReference>
<dbReference type="InterPro" id="IPR024665">
    <property type="entry name" value="TSP/COMP_coiled-coil"/>
</dbReference>
<dbReference type="InterPro" id="IPR046970">
    <property type="entry name" value="TSP/COMP_coiled-coil_sf"/>
</dbReference>
<dbReference type="InterPro" id="IPR028974">
    <property type="entry name" value="TSP_type-3_rpt"/>
</dbReference>
<dbReference type="InterPro" id="IPR048287">
    <property type="entry name" value="TSPN-like_N"/>
</dbReference>
<dbReference type="PANTHER" id="PTHR10199">
    <property type="entry name" value="THROMBOSPONDIN"/>
    <property type="match status" value="1"/>
</dbReference>
<dbReference type="PANTHER" id="PTHR10199:SF89">
    <property type="entry name" value="THROMBOSPONDIN-3"/>
    <property type="match status" value="1"/>
</dbReference>
<dbReference type="Pfam" id="PF11598">
    <property type="entry name" value="COMP"/>
    <property type="match status" value="1"/>
</dbReference>
<dbReference type="Pfam" id="PF07645">
    <property type="entry name" value="EGF_CA"/>
    <property type="match status" value="2"/>
</dbReference>
<dbReference type="Pfam" id="PF02412">
    <property type="entry name" value="TSP_3"/>
    <property type="match status" value="6"/>
</dbReference>
<dbReference type="Pfam" id="PF05735">
    <property type="entry name" value="TSP_C"/>
    <property type="match status" value="1"/>
</dbReference>
<dbReference type="SMART" id="SM00181">
    <property type="entry name" value="EGF"/>
    <property type="match status" value="4"/>
</dbReference>
<dbReference type="SMART" id="SM00179">
    <property type="entry name" value="EGF_CA"/>
    <property type="match status" value="2"/>
</dbReference>
<dbReference type="SMART" id="SM00210">
    <property type="entry name" value="TSPN"/>
    <property type="match status" value="1"/>
</dbReference>
<dbReference type="SUPFAM" id="SSF58006">
    <property type="entry name" value="Assembly domain of cartilage oligomeric matrix protein"/>
    <property type="match status" value="1"/>
</dbReference>
<dbReference type="SUPFAM" id="SSF49899">
    <property type="entry name" value="Concanavalin A-like lectins/glucanases"/>
    <property type="match status" value="2"/>
</dbReference>
<dbReference type="SUPFAM" id="SSF57184">
    <property type="entry name" value="Growth factor receptor domain"/>
    <property type="match status" value="1"/>
</dbReference>
<dbReference type="SUPFAM" id="SSF103647">
    <property type="entry name" value="TSP type-3 repeat"/>
    <property type="match status" value="3"/>
</dbReference>
<dbReference type="PROSITE" id="PS01186">
    <property type="entry name" value="EGF_2"/>
    <property type="match status" value="1"/>
</dbReference>
<dbReference type="PROSITE" id="PS50026">
    <property type="entry name" value="EGF_3"/>
    <property type="match status" value="4"/>
</dbReference>
<dbReference type="PROSITE" id="PS01187">
    <property type="entry name" value="EGF_CA"/>
    <property type="match status" value="2"/>
</dbReference>
<dbReference type="PROSITE" id="PS51234">
    <property type="entry name" value="TSP3"/>
    <property type="match status" value="8"/>
</dbReference>
<dbReference type="PROSITE" id="PS51236">
    <property type="entry name" value="TSP_CTER"/>
    <property type="match status" value="1"/>
</dbReference>
<comment type="function">
    <text evidence="1">Adhesive glycoprotein that mediates cell-to-cell and cell-to-matrix interactions. Can bind to fibrinogen, fibronectin, laminin and type V collagen (By similarity).</text>
</comment>
<comment type="subunit">
    <text evidence="3">Oligomer; disulfide-linked.</text>
</comment>
<comment type="developmental stage">
    <text evidence="9">Expressed both maternally and zygotically. Present at the gastrulation and post-segmentation stages.</text>
</comment>
<comment type="similarity">
    <text evidence="10">Belongs to the thrombospondin family.</text>
</comment>
<feature type="signal peptide" evidence="5">
    <location>
        <begin position="1"/>
        <end position="23"/>
    </location>
</feature>
<feature type="chain" id="PRO_0000035851" description="Thrombospondin-3a">
    <location>
        <begin position="24"/>
        <end position="962"/>
    </location>
</feature>
<feature type="domain" description="Laminin G-like">
    <location>
        <begin position="24"/>
        <end position="196"/>
    </location>
</feature>
<feature type="domain" description="EGF-like 1" evidence="6 10">
    <location>
        <begin position="277"/>
        <end position="318"/>
    </location>
</feature>
<feature type="domain" description="EGF-like 2; calcium-binding" evidence="6">
    <location>
        <begin position="319"/>
        <end position="358"/>
    </location>
</feature>
<feature type="domain" description="EGF-like 3; calcium-binding" evidence="6">
    <location>
        <begin position="373"/>
        <end position="412"/>
    </location>
</feature>
<feature type="domain" description="EGF-like 4" evidence="6 10">
    <location>
        <begin position="416"/>
        <end position="458"/>
    </location>
</feature>
<feature type="repeat" description="TSP type-3 1">
    <location>
        <begin position="459"/>
        <end position="493"/>
    </location>
</feature>
<feature type="repeat" description="TSP type-3 2">
    <location>
        <begin position="494"/>
        <end position="529"/>
    </location>
</feature>
<feature type="repeat" description="TSP type-3 3">
    <location>
        <begin position="530"/>
        <end position="552"/>
    </location>
</feature>
<feature type="repeat" description="TSP type-3 4">
    <location>
        <begin position="553"/>
        <end position="588"/>
    </location>
</feature>
<feature type="repeat" description="TSP type-3 5">
    <location>
        <begin position="589"/>
        <end position="611"/>
    </location>
</feature>
<feature type="repeat" description="TSP type-3 6">
    <location>
        <begin position="612"/>
        <end position="649"/>
    </location>
</feature>
<feature type="repeat" description="TSP type-3 7">
    <location>
        <begin position="650"/>
        <end position="692"/>
    </location>
</feature>
<feature type="repeat" description="TSP type-3 8">
    <location>
        <begin position="693"/>
        <end position="728"/>
    </location>
</feature>
<feature type="domain" description="TSP C-terminal" evidence="7">
    <location>
        <begin position="732"/>
        <end position="946"/>
    </location>
</feature>
<feature type="region of interest" description="Disordered" evidence="8">
    <location>
        <begin position="548"/>
        <end position="704"/>
    </location>
</feature>
<feature type="compositionally biased region" description="Acidic residues" evidence="8">
    <location>
        <begin position="557"/>
        <end position="570"/>
    </location>
</feature>
<feature type="compositionally biased region" description="Basic and acidic residues" evidence="8">
    <location>
        <begin position="631"/>
        <end position="641"/>
    </location>
</feature>
<feature type="compositionally biased region" description="Acidic residues" evidence="8">
    <location>
        <begin position="652"/>
        <end position="669"/>
    </location>
</feature>
<feature type="glycosylation site" description="N-linked (GlcNAc...) asparagine" evidence="10">
    <location>
        <position position="313"/>
    </location>
</feature>
<feature type="glycosylation site" description="N-linked (GlcNAc...) asparagine" evidence="10">
    <location>
        <position position="409"/>
    </location>
</feature>
<feature type="glycosylation site" description="N-linked (GlcNAc...) asparagine" evidence="10">
    <location>
        <position position="646"/>
    </location>
</feature>
<feature type="glycosylation site" description="N-linked (GlcNAc...) asparagine" evidence="10">
    <location>
        <position position="710"/>
    </location>
</feature>
<feature type="glycosylation site" description="N-linked (GlcNAc...) asparagine" evidence="10">
    <location>
        <position position="942"/>
    </location>
</feature>
<feature type="disulfide bond" description="Interchain" evidence="4 6">
    <location>
        <position position="269"/>
    </location>
</feature>
<feature type="disulfide bond" description="Interchain" evidence="4 6">
    <location>
        <position position="272"/>
    </location>
</feature>
<feature type="disulfide bond" evidence="3 6">
    <location>
        <begin position="281"/>
        <end position="292"/>
    </location>
</feature>
<feature type="disulfide bond" evidence="3 6">
    <location>
        <begin position="286"/>
        <end position="303"/>
    </location>
</feature>
<feature type="disulfide bond" evidence="3 6">
    <location>
        <begin position="306"/>
        <end position="317"/>
    </location>
</feature>
<feature type="disulfide bond" evidence="3 6">
    <location>
        <begin position="323"/>
        <end position="335"/>
    </location>
</feature>
<feature type="disulfide bond" evidence="3 6">
    <location>
        <begin position="329"/>
        <end position="344"/>
    </location>
</feature>
<feature type="disulfide bond" evidence="3 6">
    <location>
        <begin position="347"/>
        <end position="371"/>
    </location>
</feature>
<feature type="disulfide bond" evidence="3 6">
    <location>
        <begin position="377"/>
        <end position="390"/>
    </location>
</feature>
<feature type="disulfide bond" evidence="3 6">
    <location>
        <begin position="384"/>
        <end position="399"/>
    </location>
</feature>
<feature type="disulfide bond" evidence="3 6">
    <location>
        <begin position="402"/>
        <end position="414"/>
    </location>
</feature>
<feature type="disulfide bond" evidence="3 6">
    <location>
        <begin position="420"/>
        <end position="434"/>
    </location>
</feature>
<feature type="disulfide bond" evidence="3 6">
    <location>
        <begin position="428"/>
        <end position="444"/>
    </location>
</feature>
<feature type="disulfide bond" evidence="3 6">
    <location>
        <begin position="446"/>
        <end position="457"/>
    </location>
</feature>
<feature type="disulfide bond" evidence="2 6">
    <location>
        <begin position="473"/>
        <end position="480"/>
    </location>
</feature>
<feature type="disulfide bond" evidence="2 6">
    <location>
        <begin position="485"/>
        <end position="505"/>
    </location>
</feature>
<feature type="disulfide bond" evidence="2 6">
    <location>
        <begin position="521"/>
        <end position="541"/>
    </location>
</feature>
<feature type="disulfide bond" evidence="2 6">
    <location>
        <begin position="544"/>
        <end position="564"/>
    </location>
</feature>
<feature type="disulfide bond" evidence="2 6">
    <location>
        <begin position="580"/>
        <end position="600"/>
    </location>
</feature>
<feature type="disulfide bond" evidence="2 6">
    <location>
        <begin position="603"/>
        <end position="623"/>
    </location>
</feature>
<feature type="disulfide bond" evidence="2 6">
    <location>
        <begin position="641"/>
        <end position="661"/>
    </location>
</feature>
<feature type="disulfide bond" evidence="2 6">
    <location>
        <begin position="684"/>
        <end position="704"/>
    </location>
</feature>
<feature type="disulfide bond" evidence="2 6">
    <location>
        <begin position="720"/>
        <end position="941"/>
    </location>
</feature>
<feature type="sequence conflict" description="In Ref. 1; AAM88772." evidence="10" ref="1">
    <original>E</original>
    <variation>K</variation>
    <location>
        <position position="2"/>
    </location>
</feature>
<feature type="sequence conflict" description="In Ref. 1; AAM88772." evidence="10" ref="1">
    <original>S</original>
    <variation>F</variation>
    <location>
        <position position="17"/>
    </location>
</feature>
<feature type="sequence conflict" description="In Ref. 1; AAM88772." evidence="10" ref="1">
    <original>I</original>
    <variation>T</variation>
    <location>
        <position position="393"/>
    </location>
</feature>
<feature type="sequence conflict" description="In Ref. 1; AAM88772." evidence="10" ref="1">
    <original>A</original>
    <variation>T</variation>
    <location>
        <position position="430"/>
    </location>
</feature>
<feature type="sequence conflict" description="In Ref. 1; AAM88772." evidence="10" ref="1">
    <original>C</original>
    <variation>Y</variation>
    <location>
        <position position="796"/>
    </location>
</feature>
<feature type="sequence conflict" description="In Ref. 1; AAM88772." evidence="10" ref="1">
    <original>S</original>
    <variation>F</variation>
    <location>
        <position position="799"/>
    </location>
</feature>
<organism evidence="11">
    <name type="scientific">Danio rerio</name>
    <name type="common">Zebrafish</name>
    <name type="synonym">Brachydanio rerio</name>
    <dbReference type="NCBI Taxonomy" id="7955"/>
    <lineage>
        <taxon>Eukaryota</taxon>
        <taxon>Metazoa</taxon>
        <taxon>Chordata</taxon>
        <taxon>Craniata</taxon>
        <taxon>Vertebrata</taxon>
        <taxon>Euteleostomi</taxon>
        <taxon>Actinopterygii</taxon>
        <taxon>Neopterygii</taxon>
        <taxon>Teleostei</taxon>
        <taxon>Ostariophysi</taxon>
        <taxon>Cypriniformes</taxon>
        <taxon>Danionidae</taxon>
        <taxon>Danioninae</taxon>
        <taxon>Danio</taxon>
    </lineage>
</organism>
<keyword id="KW-0106">Calcium</keyword>
<keyword id="KW-0130">Cell adhesion</keyword>
<keyword id="KW-1015">Disulfide bond</keyword>
<keyword id="KW-0245">EGF-like domain</keyword>
<keyword id="KW-0325">Glycoprotein</keyword>
<keyword id="KW-1185">Reference proteome</keyword>
<keyword id="KW-0677">Repeat</keyword>
<keyword id="KW-0732">Signal</keyword>
<gene>
    <name type="primary">thbs3a</name>
    <name type="synonym">thbs3</name>
    <name type="synonym">tsp3</name>
    <name type="ORF">zgc:103461</name>
</gene>
<sequence>MEQMFVHIWVSLVVLMSVWSAQSDKKQDVPVIDVLGLEDVKQTVAAVEKLSLALKTLSDVYVMSTFRLPPKLGGVLLGLYNKQDNKKYLEVAIMSKINKVLVRYVREDGKLHTVNMQSPNVADGRPQSLILRVGGLRREYLSLELYVNCRLADSAQRLPPLVDLPRDAELVEIRNGHKAYARMQGSMDTLKLALGGTVAQAGALTDCPFQGDASSYNIVNGEVNSILGDHTKALIGQLIIFNQILGELREDIREQVKEMSLVRNAILECQMCGFHEPRSRCQPNPCFKGVSCMETFEYPGYRCGPCPDGMTGNGTHCQDIDECSEAQPCYTPGACVNTARGFTCESCPPGMWGPPLSGVGVEYAKSHRQECSDIDECVDLANACTPNSVCINIIGSFRCGQCKTGYVGNQTAGCFPRKSCSSLSFNPCDANAHCVMQRNGDVSCACNVGWAGNGHTCGKDTDIDGYPDRSLPCMDNHKHCRQDNCVYTPNSGQEDADNDGIGDQCDEDADGDGIKNVEDNCRLVSNKDQQNSDTDSFGDACDNCPTVPNIDQKDTDSNGEGDACDDDIDGDGIQNVLDNCPKVPNPMQTDRDRDGVGDACDSCPEISNPMQTDVDNDLVGDVCDTNQDTDGDGHQDTRDNCPDIPNSSQLDSDNDGIGDDCDEDDDNDGIPDNHAINGIGPDNCRLISNPNQKDSDSNGVGDVCENDFDNDSVMDLVDVCPESAEVTLTDFRAYQTVILDPEGDAQIDPNWVVLNQGMEIVQTMNSDPGLAVGYTAFNGVDFEGTFHVNTVTDDDCAGSIFGYQDSSSFYVVMWKQTEQTYWQSIPFRAMAEPGLQLKAVKSRTGPGEFLRNALWHAGDTDGEVKLLWKDPRNVGWLDKTSYRWQLSHRPQVGYIRVKLYEGSEMVADSDVVIDTSMRGGRLGVFCFSQENIIWSNLRYRCNDTVPEDFSSHRKQVLMHIKV</sequence>
<proteinExistence type="evidence at transcript level"/>